<reference key="1">
    <citation type="journal article" date="1998" name="DNA Res.">
        <title>Structural analysis of Arabidopsis thaliana chromosome 5. V. Sequence features of the regions of 1,381,565 bp covered by twenty one physically assigned P1 and TAC clones.</title>
        <authorList>
            <person name="Kaneko T."/>
            <person name="Kotani H."/>
            <person name="Nakamura Y."/>
            <person name="Sato S."/>
            <person name="Asamizu E."/>
            <person name="Miyajima N."/>
            <person name="Tabata S."/>
        </authorList>
    </citation>
    <scope>NUCLEOTIDE SEQUENCE [LARGE SCALE GENOMIC DNA]</scope>
    <source>
        <strain>cv. Columbia</strain>
    </source>
</reference>
<reference key="2">
    <citation type="journal article" date="2017" name="Plant J.">
        <title>Araport11: a complete reannotation of the Arabidopsis thaliana reference genome.</title>
        <authorList>
            <person name="Cheng C.Y."/>
            <person name="Krishnakumar V."/>
            <person name="Chan A.P."/>
            <person name="Thibaud-Nissen F."/>
            <person name="Schobel S."/>
            <person name="Town C.D."/>
        </authorList>
    </citation>
    <scope>GENOME REANNOTATION</scope>
    <source>
        <strain>cv. Columbia</strain>
    </source>
</reference>
<reference key="3">
    <citation type="journal article" date="2003" name="Science">
        <title>Empirical analysis of transcriptional activity in the Arabidopsis genome.</title>
        <authorList>
            <person name="Yamada K."/>
            <person name="Lim J."/>
            <person name="Dale J.M."/>
            <person name="Chen H."/>
            <person name="Shinn P."/>
            <person name="Palm C.J."/>
            <person name="Southwick A.M."/>
            <person name="Wu H.C."/>
            <person name="Kim C.J."/>
            <person name="Nguyen M."/>
            <person name="Pham P.K."/>
            <person name="Cheuk R.F."/>
            <person name="Karlin-Newmann G."/>
            <person name="Liu S.X."/>
            <person name="Lam B."/>
            <person name="Sakano H."/>
            <person name="Wu T."/>
            <person name="Yu G."/>
            <person name="Miranda M."/>
            <person name="Quach H.L."/>
            <person name="Tripp M."/>
            <person name="Chang C.H."/>
            <person name="Lee J.M."/>
            <person name="Toriumi M.J."/>
            <person name="Chan M.M."/>
            <person name="Tang C.C."/>
            <person name="Onodera C.S."/>
            <person name="Deng J.M."/>
            <person name="Akiyama K."/>
            <person name="Ansari Y."/>
            <person name="Arakawa T."/>
            <person name="Banh J."/>
            <person name="Banno F."/>
            <person name="Bowser L."/>
            <person name="Brooks S.Y."/>
            <person name="Carninci P."/>
            <person name="Chao Q."/>
            <person name="Choy N."/>
            <person name="Enju A."/>
            <person name="Goldsmith A.D."/>
            <person name="Gurjal M."/>
            <person name="Hansen N.F."/>
            <person name="Hayashizaki Y."/>
            <person name="Johnson-Hopson C."/>
            <person name="Hsuan V.W."/>
            <person name="Iida K."/>
            <person name="Karnes M."/>
            <person name="Khan S."/>
            <person name="Koesema E."/>
            <person name="Ishida J."/>
            <person name="Jiang P.X."/>
            <person name="Jones T."/>
            <person name="Kawai J."/>
            <person name="Kamiya A."/>
            <person name="Meyers C."/>
            <person name="Nakajima M."/>
            <person name="Narusaka M."/>
            <person name="Seki M."/>
            <person name="Sakurai T."/>
            <person name="Satou M."/>
            <person name="Tamse R."/>
            <person name="Vaysberg M."/>
            <person name="Wallender E.K."/>
            <person name="Wong C."/>
            <person name="Yamamura Y."/>
            <person name="Yuan S."/>
            <person name="Shinozaki K."/>
            <person name="Davis R.W."/>
            <person name="Theologis A."/>
            <person name="Ecker J.R."/>
        </authorList>
    </citation>
    <scope>NUCLEOTIDE SEQUENCE [LARGE SCALE MRNA]</scope>
    <source>
        <strain>cv. Columbia</strain>
    </source>
</reference>
<reference key="4">
    <citation type="journal article" date="2002" name="J. Biol. Chem.">
        <title>Functional cloning and characterization of a plant efflux carrier for multidrug and heavy metal detoxification.</title>
        <authorList>
            <person name="Li L."/>
            <person name="He Z."/>
            <person name="Pandey G.K."/>
            <person name="Tsuchiya T."/>
            <person name="Luan S."/>
        </authorList>
    </citation>
    <scope>GENE FAMILY</scope>
    <scope>NOMENCLATURE</scope>
</reference>
<reference key="5">
    <citation type="journal article" date="2003" name="Eur. J. Biochem.">
        <title>The multidrug/oligosaccharidyl-lipid/polysaccharide (MOP) exporter superfamily.</title>
        <authorList>
            <person name="Hvorup R.N."/>
            <person name="Winnen B."/>
            <person name="Chang A.B."/>
            <person name="Jiang Y."/>
            <person name="Zhou X.F."/>
            <person name="Saier M.H. Jr."/>
        </authorList>
    </citation>
    <scope>GENE FAMILY</scope>
</reference>
<sequence>MRGGDGEEGSESRVALLKSPHTAEEDGEGLKDRILVETKKLWQIVGPAIFSRVTTYSMLVITQAFAGHLGDLELAAISIVNNVTVGFNFGLLLGMASALETLCGQAFGAKKYHMLGVYMQRSWIVLFFCCVLLLPTYIFTTPVLKFLGQPDDIAELSGVVAIWVIPLHFAFTLSFPLQRFLQCQLKNRVTAYAAAVALVVHILVCWLFVDGLKLGVVGTVATISISWWVNVLILLVYSTCGGCPLTWTGLSSEALTGLWEFLKLSASSGVMLCLENWYYRILIIMTGNLQNARIAVDSLSICMAINGWEMMIPLAFFAGTGVRVANELGAGNGKGARFATIVSVTQSLIIGLFFWVLIMLLHNQIAWIFSSSVAVLDAVNKLSLLLAFTVLLNSVQPVLSGVAVGSGWQSYVAYINLGCYYCIGVPLGFLMGWGFKLGVMGIWGGMIFGGTAVQTMILSFITMRCDWEKEAQKASARINKWSNTIK</sequence>
<keyword id="KW-0472">Membrane</keyword>
<keyword id="KW-1185">Reference proteome</keyword>
<keyword id="KW-0812">Transmembrane</keyword>
<keyword id="KW-1133">Transmembrane helix</keyword>
<keyword id="KW-0813">Transport</keyword>
<organism>
    <name type="scientific">Arabidopsis thaliana</name>
    <name type="common">Mouse-ear cress</name>
    <dbReference type="NCBI Taxonomy" id="3702"/>
    <lineage>
        <taxon>Eukaryota</taxon>
        <taxon>Viridiplantae</taxon>
        <taxon>Streptophyta</taxon>
        <taxon>Embryophyta</taxon>
        <taxon>Tracheophyta</taxon>
        <taxon>Spermatophyta</taxon>
        <taxon>Magnoliopsida</taxon>
        <taxon>eudicotyledons</taxon>
        <taxon>Gunneridae</taxon>
        <taxon>Pentapetalae</taxon>
        <taxon>rosids</taxon>
        <taxon>malvids</taxon>
        <taxon>Brassicales</taxon>
        <taxon>Brassicaceae</taxon>
        <taxon>Camelineae</taxon>
        <taxon>Arabidopsis</taxon>
    </lineage>
</organism>
<feature type="chain" id="PRO_0000434068" description="Protein DETOXIFICATION 27">
    <location>
        <begin position="1"/>
        <end position="486"/>
    </location>
</feature>
<feature type="transmembrane region" description="Helical" evidence="1">
    <location>
        <begin position="41"/>
        <end position="61"/>
    </location>
</feature>
<feature type="transmembrane region" description="Helical" evidence="1">
    <location>
        <begin position="74"/>
        <end position="94"/>
    </location>
</feature>
<feature type="transmembrane region" description="Helical" evidence="1">
    <location>
        <begin position="124"/>
        <end position="144"/>
    </location>
</feature>
<feature type="transmembrane region" description="Helical" evidence="1">
    <location>
        <begin position="153"/>
        <end position="173"/>
    </location>
</feature>
<feature type="transmembrane region" description="Helical" evidence="1">
    <location>
        <begin position="189"/>
        <end position="209"/>
    </location>
</feature>
<feature type="transmembrane region" description="Helical" evidence="1">
    <location>
        <begin position="216"/>
        <end position="236"/>
    </location>
</feature>
<feature type="transmembrane region" description="Helical" evidence="4">
    <location>
        <begin position="269"/>
        <end position="289"/>
    </location>
</feature>
<feature type="transmembrane region" description="Helical" evidence="1">
    <location>
        <begin position="299"/>
        <end position="319"/>
    </location>
</feature>
<feature type="transmembrane region" description="Helical" evidence="1">
    <location>
        <begin position="349"/>
        <end position="369"/>
    </location>
</feature>
<feature type="transmembrane region" description="Helical" evidence="1">
    <location>
        <begin position="384"/>
        <end position="404"/>
    </location>
</feature>
<feature type="transmembrane region" description="Helical" evidence="1">
    <location>
        <begin position="407"/>
        <end position="427"/>
    </location>
</feature>
<feature type="transmembrane region" description="Helical" evidence="1">
    <location>
        <begin position="439"/>
        <end position="461"/>
    </location>
</feature>
<feature type="region of interest" description="Disordered" evidence="2">
    <location>
        <begin position="1"/>
        <end position="25"/>
    </location>
</feature>
<dbReference type="EMBL" id="AB011479">
    <property type="protein sequence ID" value="BAB11560.1"/>
    <property type="molecule type" value="Genomic_DNA"/>
</dbReference>
<dbReference type="EMBL" id="CP002688">
    <property type="protein sequence ID" value="AED98045.1"/>
    <property type="molecule type" value="Genomic_DNA"/>
</dbReference>
<dbReference type="EMBL" id="AF375456">
    <property type="protein sequence ID" value="AAK53040.1"/>
    <property type="molecule type" value="mRNA"/>
</dbReference>
<dbReference type="EMBL" id="AY143960">
    <property type="protein sequence ID" value="AAN28899.1"/>
    <property type="molecule type" value="mRNA"/>
</dbReference>
<dbReference type="RefSeq" id="NP_201341.1">
    <property type="nucleotide sequence ID" value="NM_125936.4"/>
</dbReference>
<dbReference type="SMR" id="Q9FKQ1"/>
<dbReference type="FunCoup" id="Q9FKQ1">
    <property type="interactions" value="1"/>
</dbReference>
<dbReference type="STRING" id="3702.Q9FKQ1"/>
<dbReference type="GlyGen" id="Q9FKQ1">
    <property type="glycosylation" value="1 site"/>
</dbReference>
<dbReference type="PaxDb" id="3702-AT5G65380.1"/>
<dbReference type="ProteomicsDB" id="221933"/>
<dbReference type="EnsemblPlants" id="AT5G65380.1">
    <property type="protein sequence ID" value="AT5G65380.1"/>
    <property type="gene ID" value="AT5G65380"/>
</dbReference>
<dbReference type="GeneID" id="836663"/>
<dbReference type="Gramene" id="AT5G65380.1">
    <property type="protein sequence ID" value="AT5G65380.1"/>
    <property type="gene ID" value="AT5G65380"/>
</dbReference>
<dbReference type="KEGG" id="ath:AT5G65380"/>
<dbReference type="Araport" id="AT5G65380"/>
<dbReference type="TAIR" id="AT5G65380"/>
<dbReference type="eggNOG" id="KOG1347">
    <property type="taxonomic scope" value="Eukaryota"/>
</dbReference>
<dbReference type="HOGENOM" id="CLU_012893_1_4_1"/>
<dbReference type="InParanoid" id="Q9FKQ1"/>
<dbReference type="OMA" id="MAMFVCE"/>
<dbReference type="OrthoDB" id="2126698at2759"/>
<dbReference type="PhylomeDB" id="Q9FKQ1"/>
<dbReference type="PRO" id="PR:Q9FKQ1"/>
<dbReference type="Proteomes" id="UP000006548">
    <property type="component" value="Chromosome 5"/>
</dbReference>
<dbReference type="ExpressionAtlas" id="Q9FKQ1">
    <property type="expression patterns" value="baseline and differential"/>
</dbReference>
<dbReference type="GO" id="GO:0016020">
    <property type="term" value="C:membrane"/>
    <property type="evidence" value="ECO:0007669"/>
    <property type="project" value="UniProtKB-SubCell"/>
</dbReference>
<dbReference type="GO" id="GO:0015297">
    <property type="term" value="F:antiporter activity"/>
    <property type="evidence" value="ECO:0007669"/>
    <property type="project" value="InterPro"/>
</dbReference>
<dbReference type="GO" id="GO:0042910">
    <property type="term" value="F:xenobiotic transmembrane transporter activity"/>
    <property type="evidence" value="ECO:0007669"/>
    <property type="project" value="InterPro"/>
</dbReference>
<dbReference type="GO" id="GO:1990961">
    <property type="term" value="P:xenobiotic detoxification by transmembrane export across the plasma membrane"/>
    <property type="evidence" value="ECO:0007669"/>
    <property type="project" value="InterPro"/>
</dbReference>
<dbReference type="CDD" id="cd13132">
    <property type="entry name" value="MATE_eukaryotic"/>
    <property type="match status" value="1"/>
</dbReference>
<dbReference type="InterPro" id="IPR045069">
    <property type="entry name" value="MATE_euk"/>
</dbReference>
<dbReference type="InterPro" id="IPR002528">
    <property type="entry name" value="MATE_fam"/>
</dbReference>
<dbReference type="NCBIfam" id="TIGR00797">
    <property type="entry name" value="matE"/>
    <property type="match status" value="1"/>
</dbReference>
<dbReference type="PANTHER" id="PTHR11206">
    <property type="entry name" value="MULTIDRUG RESISTANCE PROTEIN"/>
    <property type="match status" value="1"/>
</dbReference>
<dbReference type="Pfam" id="PF01554">
    <property type="entry name" value="MatE"/>
    <property type="match status" value="2"/>
</dbReference>
<proteinExistence type="evidence at transcript level"/>
<comment type="subcellular location">
    <subcellularLocation>
        <location evidence="1">Membrane</location>
        <topology evidence="1">Multi-pass membrane protein</topology>
    </subcellularLocation>
</comment>
<comment type="similarity">
    <text evidence="4">Belongs to the multi antimicrobial extrusion (MATE) (TC 2.A.66.1) family.</text>
</comment>
<protein>
    <recommendedName>
        <fullName evidence="3">Protein DETOXIFICATION 27</fullName>
        <shortName evidence="3">AtDTX27</shortName>
    </recommendedName>
    <alternativeName>
        <fullName evidence="4">Multidrug and toxic compound extrusion protein 27</fullName>
        <shortName evidence="4">MATE protein 27</shortName>
    </alternativeName>
</protein>
<accession>Q9FKQ1</accession>
<gene>
    <name evidence="3" type="primary">DTX27</name>
    <name evidence="5" type="ordered locus">At5g65380</name>
    <name evidence="6" type="ORF">MNA5.11</name>
</gene>
<name>DTX27_ARATH</name>
<evidence type="ECO:0000255" key="1"/>
<evidence type="ECO:0000256" key="2">
    <source>
        <dbReference type="SAM" id="MobiDB-lite"/>
    </source>
</evidence>
<evidence type="ECO:0000303" key="3">
    <source>
    </source>
</evidence>
<evidence type="ECO:0000305" key="4"/>
<evidence type="ECO:0000312" key="5">
    <source>
        <dbReference type="Araport" id="AT5G65380"/>
    </source>
</evidence>
<evidence type="ECO:0000312" key="6">
    <source>
        <dbReference type="EMBL" id="BAB11560.1"/>
    </source>
</evidence>